<gene>
    <name type="ordered locus">At3g02320</name>
    <name type="ORF">F11A12.1</name>
    <name type="ORF">F11A12_100</name>
    <name type="ORF">F14P3.2</name>
</gene>
<proteinExistence type="evidence at protein level"/>
<organism>
    <name type="scientific">Arabidopsis thaliana</name>
    <name type="common">Mouse-ear cress</name>
    <dbReference type="NCBI Taxonomy" id="3702"/>
    <lineage>
        <taxon>Eukaryota</taxon>
        <taxon>Viridiplantae</taxon>
        <taxon>Streptophyta</taxon>
        <taxon>Embryophyta</taxon>
        <taxon>Tracheophyta</taxon>
        <taxon>Spermatophyta</taxon>
        <taxon>Magnoliopsida</taxon>
        <taxon>eudicotyledons</taxon>
        <taxon>Gunneridae</taxon>
        <taxon>Pentapetalae</taxon>
        <taxon>rosids</taxon>
        <taxon>malvids</taxon>
        <taxon>Brassicales</taxon>
        <taxon>Brassicaceae</taxon>
        <taxon>Camelineae</taxon>
        <taxon>Arabidopsis</taxon>
    </lineage>
</organism>
<keyword id="KW-0479">Metal-binding</keyword>
<keyword id="KW-0489">Methyltransferase</keyword>
<keyword id="KW-1185">Reference proteome</keyword>
<keyword id="KW-0694">RNA-binding</keyword>
<keyword id="KW-0949">S-adenosyl-L-methionine</keyword>
<keyword id="KW-0808">Transferase</keyword>
<keyword id="KW-0819">tRNA processing</keyword>
<keyword id="KW-0820">tRNA-binding</keyword>
<keyword id="KW-0862">Zinc</keyword>
<dbReference type="EC" id="2.1.1.216" evidence="4"/>
<dbReference type="EMBL" id="AC009755">
    <property type="protein sequence ID" value="AAF02109.1"/>
    <property type="status" value="ALT_SEQ"/>
    <property type="molecule type" value="Genomic_DNA"/>
</dbReference>
<dbReference type="EMBL" id="AC068900">
    <property type="protein sequence ID" value="AAG12600.1"/>
    <property type="status" value="ALT_SEQ"/>
    <property type="molecule type" value="Genomic_DNA"/>
</dbReference>
<dbReference type="EMBL" id="CP002686">
    <property type="protein sequence ID" value="AEE73792.1"/>
    <property type="molecule type" value="Genomic_DNA"/>
</dbReference>
<dbReference type="EMBL" id="AK175413">
    <property type="protein sequence ID" value="BAD43176.1"/>
    <property type="molecule type" value="mRNA"/>
</dbReference>
<dbReference type="EMBL" id="AK175448">
    <property type="protein sequence ID" value="BAD43211.1"/>
    <property type="molecule type" value="mRNA"/>
</dbReference>
<dbReference type="RefSeq" id="NP_186881.2">
    <property type="nucleotide sequence ID" value="NM_111099.5"/>
</dbReference>
<dbReference type="SMR" id="Q9SRU7"/>
<dbReference type="FunCoup" id="Q9SRU7">
    <property type="interactions" value="4412"/>
</dbReference>
<dbReference type="STRING" id="3702.Q9SRU7"/>
<dbReference type="PaxDb" id="3702-AT3G02320.1"/>
<dbReference type="ProteomicsDB" id="245240"/>
<dbReference type="EnsemblPlants" id="AT3G02320.1">
    <property type="protein sequence ID" value="AT3G02320.1"/>
    <property type="gene ID" value="AT3G02320"/>
</dbReference>
<dbReference type="GeneID" id="820451"/>
<dbReference type="Gramene" id="AT3G02320.1">
    <property type="protein sequence ID" value="AT3G02320.1"/>
    <property type="gene ID" value="AT3G02320"/>
</dbReference>
<dbReference type="KEGG" id="ath:AT3G02320"/>
<dbReference type="Araport" id="AT3G02320"/>
<dbReference type="TAIR" id="AT3G02320">
    <property type="gene designation" value="TRM1A"/>
</dbReference>
<dbReference type="eggNOG" id="KOG1253">
    <property type="taxonomic scope" value="Eukaryota"/>
</dbReference>
<dbReference type="HOGENOM" id="CLU_010862_4_1_1"/>
<dbReference type="InParanoid" id="Q9SRU7"/>
<dbReference type="OMA" id="MKCCHEM"/>
<dbReference type="PhylomeDB" id="Q9SRU7"/>
<dbReference type="PRO" id="PR:Q9SRU7"/>
<dbReference type="Proteomes" id="UP000006548">
    <property type="component" value="Chromosome 3"/>
</dbReference>
<dbReference type="ExpressionAtlas" id="Q9SRU7">
    <property type="expression patterns" value="baseline and differential"/>
</dbReference>
<dbReference type="GO" id="GO:0160104">
    <property type="term" value="F:tRNA (guanine(26)-N2)-dimethyltransferase activity"/>
    <property type="evidence" value="ECO:0007669"/>
    <property type="project" value="UniProtKB-EC"/>
</dbReference>
<dbReference type="GO" id="GO:0000049">
    <property type="term" value="F:tRNA binding"/>
    <property type="evidence" value="ECO:0007669"/>
    <property type="project" value="UniProtKB-KW"/>
</dbReference>
<dbReference type="GO" id="GO:0032259">
    <property type="term" value="P:methylation"/>
    <property type="evidence" value="ECO:0007669"/>
    <property type="project" value="UniProtKB-KW"/>
</dbReference>
<dbReference type="GO" id="GO:0006400">
    <property type="term" value="P:tRNA modification"/>
    <property type="evidence" value="ECO:0000314"/>
    <property type="project" value="TAIR"/>
</dbReference>
<dbReference type="FunFam" id="3.30.56.70:FF:000001">
    <property type="entry name" value="tRNA (guanine(26)-N(2))-dimethyltransferase"/>
    <property type="match status" value="1"/>
</dbReference>
<dbReference type="FunFam" id="3.40.50.150:FF:000114">
    <property type="entry name" value="tRNA (guanine(26)-N(2))-dimethyltransferase"/>
    <property type="match status" value="1"/>
</dbReference>
<dbReference type="Gene3D" id="3.30.56.70">
    <property type="entry name" value="N2,N2-dimethylguanosine tRNA methyltransferase, C-terminal domain"/>
    <property type="match status" value="1"/>
</dbReference>
<dbReference type="Gene3D" id="3.40.50.150">
    <property type="entry name" value="Vaccinia Virus protein VP39"/>
    <property type="match status" value="1"/>
</dbReference>
<dbReference type="InterPro" id="IPR029063">
    <property type="entry name" value="SAM-dependent_MTases_sf"/>
</dbReference>
<dbReference type="InterPro" id="IPR002905">
    <property type="entry name" value="Trm1"/>
</dbReference>
<dbReference type="InterPro" id="IPR042296">
    <property type="entry name" value="tRNA_met_Trm1_C"/>
</dbReference>
<dbReference type="NCBIfam" id="TIGR00308">
    <property type="entry name" value="TRM1"/>
    <property type="match status" value="1"/>
</dbReference>
<dbReference type="PANTHER" id="PTHR10631">
    <property type="entry name" value="N 2 ,N 2 -DIMETHYLGUANOSINE TRNA METHYLTRANSFERASE"/>
    <property type="match status" value="1"/>
</dbReference>
<dbReference type="PANTHER" id="PTHR10631:SF3">
    <property type="entry name" value="TRNA (GUANINE(26)-N(2))-DIMETHYLTRANSFERASE"/>
    <property type="match status" value="1"/>
</dbReference>
<dbReference type="Pfam" id="PF02005">
    <property type="entry name" value="TRM"/>
    <property type="match status" value="1"/>
</dbReference>
<dbReference type="SUPFAM" id="SSF53335">
    <property type="entry name" value="S-adenosyl-L-methionine-dependent methyltransferases"/>
    <property type="match status" value="1"/>
</dbReference>
<dbReference type="PROSITE" id="PS51626">
    <property type="entry name" value="SAM_MT_TRM1"/>
    <property type="match status" value="1"/>
</dbReference>
<sequence>METDLNDYTVIKEGEAEILMHKKNQVFFNKAQVNNRDMSIAVLREFLSKRKQEHEAKSSKRTRPASKVIEKDASEASKEETPSENGMNNGDHEVASEDGPSSVSKDPAKTTERFAPREPKPPKVLEALSASGLRALRYAREIEGIGQVVALDNDLASVEACQRNIKFNGSVAISKVESHHTDARVHMLTHPKEFDVVDLDPYGSPSIFLDSAIQSVTDGGLLMCTATDMAVLCGGNGEVCYSKYGSYPLRAKYCHEMALRILLASIESHANRYKRYIVPVLSVQMDFYVRVFVRVYTSASAMKNTPLKLSYVYQCIGCDSFHLQPVGRSLPKNNSVRYLPAIGPVVKQDCNHCGKKYNMGGPIWSAPMHDPEWVTSILNSVKSMKDRYPAYDRISAVLTTVSEELLDVPLFLSLHNLCATLKCISPSAAMFRSAVINANYRISGTHVNPLGMKTDAPMEVIWDIMRCWVKNHPIKAQSPEQPGSVILSKEPSHEVDFSRHIGSLSKAQAKKVARFLPNPEKHWGPKLRAGRQITSKHVSLIGHEAVNGHLSQHHEELKEEDEEAEPEDNVQDKVDPKRQKTATDNITST</sequence>
<evidence type="ECO:0000250" key="1">
    <source>
        <dbReference type="UniProtKB" id="O67010"/>
    </source>
</evidence>
<evidence type="ECO:0000255" key="2">
    <source>
        <dbReference type="PROSITE-ProRule" id="PRU00958"/>
    </source>
</evidence>
<evidence type="ECO:0000256" key="3">
    <source>
        <dbReference type="SAM" id="MobiDB-lite"/>
    </source>
</evidence>
<evidence type="ECO:0000269" key="4">
    <source>
    </source>
</evidence>
<evidence type="ECO:0000303" key="5">
    <source>
    </source>
</evidence>
<evidence type="ECO:0000305" key="6"/>
<protein>
    <recommendedName>
        <fullName evidence="5">tRNA (guanine(26)-N(2))-dimethyltransferase 2</fullName>
        <ecNumber evidence="4">2.1.1.216</ecNumber>
    </recommendedName>
    <alternativeName>
        <fullName evidence="5">tRNA 2,2-dimethylguanosine-26 methyltransferase 2</fullName>
    </alternativeName>
    <alternativeName>
        <fullName evidence="5">tRNA(guanine-26,N(2)-N(2)) methyltransferase 2</fullName>
    </alternativeName>
    <alternativeName>
        <fullName evidence="5">tRNA(m(2,2)G26)dimethyltransferase 2</fullName>
    </alternativeName>
</protein>
<name>TRM2_ARATH</name>
<feature type="chain" id="PRO_0000147676" description="tRNA (guanine(26)-N(2))-dimethyltransferase 2">
    <location>
        <begin position="1"/>
        <end position="589"/>
    </location>
</feature>
<feature type="domain" description="Trm1 methyltransferase" evidence="2">
    <location>
        <begin position="9"/>
        <end position="465"/>
    </location>
</feature>
<feature type="region of interest" description="Disordered" evidence="3">
    <location>
        <begin position="51"/>
        <end position="122"/>
    </location>
</feature>
<feature type="region of interest" description="Disordered" evidence="3">
    <location>
        <begin position="550"/>
        <end position="589"/>
    </location>
</feature>
<feature type="compositionally biased region" description="Basic and acidic residues" evidence="3">
    <location>
        <begin position="68"/>
        <end position="81"/>
    </location>
</feature>
<feature type="compositionally biased region" description="Basic and acidic residues" evidence="3">
    <location>
        <begin position="106"/>
        <end position="122"/>
    </location>
</feature>
<feature type="compositionally biased region" description="Acidic residues" evidence="3">
    <location>
        <begin position="558"/>
        <end position="569"/>
    </location>
</feature>
<feature type="binding site" evidence="1">
    <location>
        <position position="36"/>
    </location>
    <ligand>
        <name>S-adenosyl-L-methionine</name>
        <dbReference type="ChEBI" id="CHEBI:59789"/>
    </ligand>
</feature>
<feature type="binding site" evidence="1">
    <location>
        <position position="134"/>
    </location>
    <ligand>
        <name>S-adenosyl-L-methionine</name>
        <dbReference type="ChEBI" id="CHEBI:59789"/>
    </ligand>
</feature>
<feature type="binding site" evidence="1">
    <location>
        <position position="152"/>
    </location>
    <ligand>
        <name>S-adenosyl-L-methionine</name>
        <dbReference type="ChEBI" id="CHEBI:59789"/>
    </ligand>
</feature>
<feature type="binding site" evidence="1">
    <location>
        <position position="185"/>
    </location>
    <ligand>
        <name>S-adenosyl-L-methionine</name>
        <dbReference type="ChEBI" id="CHEBI:59789"/>
    </ligand>
</feature>
<feature type="binding site" evidence="1">
    <location>
        <position position="315"/>
    </location>
    <ligand>
        <name>Zn(2+)</name>
        <dbReference type="ChEBI" id="CHEBI:29105"/>
    </ligand>
</feature>
<feature type="binding site" evidence="1">
    <location>
        <position position="318"/>
    </location>
    <ligand>
        <name>Zn(2+)</name>
        <dbReference type="ChEBI" id="CHEBI:29105"/>
    </ligand>
</feature>
<feature type="binding site" evidence="1">
    <location>
        <position position="350"/>
    </location>
    <ligand>
        <name>Zn(2+)</name>
        <dbReference type="ChEBI" id="CHEBI:29105"/>
    </ligand>
</feature>
<feature type="binding site" evidence="1">
    <location>
        <position position="353"/>
    </location>
    <ligand>
        <name>Zn(2+)</name>
        <dbReference type="ChEBI" id="CHEBI:29105"/>
    </ligand>
</feature>
<feature type="mutagenesis site" description="Loss of activity." evidence="4">
    <original>D</original>
    <variation>A</variation>
    <location>
        <position position="200"/>
    </location>
</feature>
<feature type="sequence conflict" description="In Ref. 3; BAD43211/BAD43176." evidence="6" ref="3">
    <original>E</original>
    <variation>G</variation>
    <location>
        <position position="75"/>
    </location>
</feature>
<comment type="function">
    <text evidence="4">Dimethylates a single guanine residue at position 26 of most tRNAs using S-adenosyl-L-methionine as donor of the methyl groups.</text>
</comment>
<comment type="catalytic activity">
    <reaction evidence="4">
        <text>guanosine(26) in tRNA + 2 S-adenosyl-L-methionine = N(2)-dimethylguanosine(26) in tRNA + 2 S-adenosyl-L-homocysteine + 2 H(+)</text>
        <dbReference type="Rhea" id="RHEA:43140"/>
        <dbReference type="Rhea" id="RHEA-COMP:10359"/>
        <dbReference type="Rhea" id="RHEA-COMP:10360"/>
        <dbReference type="ChEBI" id="CHEBI:15378"/>
        <dbReference type="ChEBI" id="CHEBI:57856"/>
        <dbReference type="ChEBI" id="CHEBI:59789"/>
        <dbReference type="ChEBI" id="CHEBI:74269"/>
        <dbReference type="ChEBI" id="CHEBI:74513"/>
        <dbReference type="EC" id="2.1.1.216"/>
    </reaction>
</comment>
<comment type="similarity">
    <text evidence="2">Belongs to the class I-like SAM-binding methyltransferase superfamily. Trm1 family.</text>
</comment>
<comment type="sequence caution" evidence="6">
    <conflict type="erroneous gene model prediction">
        <sequence resource="EMBL-CDS" id="AAF02109"/>
    </conflict>
</comment>
<comment type="sequence caution" evidence="6">
    <conflict type="erroneous gene model prediction">
        <sequence resource="EMBL-CDS" id="AAG12600"/>
    </conflict>
</comment>
<accession>Q9SRU7</accession>
<accession>Q682B9</accession>
<reference key="1">
    <citation type="journal article" date="2000" name="Nature">
        <title>Sequence and analysis of chromosome 3 of the plant Arabidopsis thaliana.</title>
        <authorList>
            <person name="Salanoubat M."/>
            <person name="Lemcke K."/>
            <person name="Rieger M."/>
            <person name="Ansorge W."/>
            <person name="Unseld M."/>
            <person name="Fartmann B."/>
            <person name="Valle G."/>
            <person name="Bloecker H."/>
            <person name="Perez-Alonso M."/>
            <person name="Obermaier B."/>
            <person name="Delseny M."/>
            <person name="Boutry M."/>
            <person name="Grivell L.A."/>
            <person name="Mache R."/>
            <person name="Puigdomenech P."/>
            <person name="De Simone V."/>
            <person name="Choisne N."/>
            <person name="Artiguenave F."/>
            <person name="Robert C."/>
            <person name="Brottier P."/>
            <person name="Wincker P."/>
            <person name="Cattolico L."/>
            <person name="Weissenbach J."/>
            <person name="Saurin W."/>
            <person name="Quetier F."/>
            <person name="Schaefer M."/>
            <person name="Mueller-Auer S."/>
            <person name="Gabel C."/>
            <person name="Fuchs M."/>
            <person name="Benes V."/>
            <person name="Wurmbach E."/>
            <person name="Drzonek H."/>
            <person name="Erfle H."/>
            <person name="Jordan N."/>
            <person name="Bangert S."/>
            <person name="Wiedelmann R."/>
            <person name="Kranz H."/>
            <person name="Voss H."/>
            <person name="Holland R."/>
            <person name="Brandt P."/>
            <person name="Nyakatura G."/>
            <person name="Vezzi A."/>
            <person name="D'Angelo M."/>
            <person name="Pallavicini A."/>
            <person name="Toppo S."/>
            <person name="Simionati B."/>
            <person name="Conrad A."/>
            <person name="Hornischer K."/>
            <person name="Kauer G."/>
            <person name="Loehnert T.-H."/>
            <person name="Nordsiek G."/>
            <person name="Reichelt J."/>
            <person name="Scharfe M."/>
            <person name="Schoen O."/>
            <person name="Bargues M."/>
            <person name="Terol J."/>
            <person name="Climent J."/>
            <person name="Navarro P."/>
            <person name="Collado C."/>
            <person name="Perez-Perez A."/>
            <person name="Ottenwaelder B."/>
            <person name="Duchemin D."/>
            <person name="Cooke R."/>
            <person name="Laudie M."/>
            <person name="Berger-Llauro C."/>
            <person name="Purnelle B."/>
            <person name="Masuy D."/>
            <person name="de Haan M."/>
            <person name="Maarse A.C."/>
            <person name="Alcaraz J.-P."/>
            <person name="Cottet A."/>
            <person name="Casacuberta E."/>
            <person name="Monfort A."/>
            <person name="Argiriou A."/>
            <person name="Flores M."/>
            <person name="Liguori R."/>
            <person name="Vitale D."/>
            <person name="Mannhaupt G."/>
            <person name="Haase D."/>
            <person name="Schoof H."/>
            <person name="Rudd S."/>
            <person name="Zaccaria P."/>
            <person name="Mewes H.-W."/>
            <person name="Mayer K.F.X."/>
            <person name="Kaul S."/>
            <person name="Town C.D."/>
            <person name="Koo H.L."/>
            <person name="Tallon L.J."/>
            <person name="Jenkins J."/>
            <person name="Rooney T."/>
            <person name="Rizzo M."/>
            <person name="Walts A."/>
            <person name="Utterback T."/>
            <person name="Fujii C.Y."/>
            <person name="Shea T.P."/>
            <person name="Creasy T.H."/>
            <person name="Haas B."/>
            <person name="Maiti R."/>
            <person name="Wu D."/>
            <person name="Peterson J."/>
            <person name="Van Aken S."/>
            <person name="Pai G."/>
            <person name="Militscher J."/>
            <person name="Sellers P."/>
            <person name="Gill J.E."/>
            <person name="Feldblyum T.V."/>
            <person name="Preuss D."/>
            <person name="Lin X."/>
            <person name="Nierman W.C."/>
            <person name="Salzberg S.L."/>
            <person name="White O."/>
            <person name="Venter J.C."/>
            <person name="Fraser C.M."/>
            <person name="Kaneko T."/>
            <person name="Nakamura Y."/>
            <person name="Sato S."/>
            <person name="Kato T."/>
            <person name="Asamizu E."/>
            <person name="Sasamoto S."/>
            <person name="Kimura T."/>
            <person name="Idesawa K."/>
            <person name="Kawashima K."/>
            <person name="Kishida Y."/>
            <person name="Kiyokawa C."/>
            <person name="Kohara M."/>
            <person name="Matsumoto M."/>
            <person name="Matsuno A."/>
            <person name="Muraki A."/>
            <person name="Nakayama S."/>
            <person name="Nakazaki N."/>
            <person name="Shinpo S."/>
            <person name="Takeuchi C."/>
            <person name="Wada T."/>
            <person name="Watanabe A."/>
            <person name="Yamada M."/>
            <person name="Yasuda M."/>
            <person name="Tabata S."/>
        </authorList>
    </citation>
    <scope>NUCLEOTIDE SEQUENCE [LARGE SCALE GENOMIC DNA]</scope>
    <source>
        <strain>cv. Columbia</strain>
    </source>
</reference>
<reference key="2">
    <citation type="journal article" date="2017" name="Plant J.">
        <title>Araport11: a complete reannotation of the Arabidopsis thaliana reference genome.</title>
        <authorList>
            <person name="Cheng C.Y."/>
            <person name="Krishnakumar V."/>
            <person name="Chan A.P."/>
            <person name="Thibaud-Nissen F."/>
            <person name="Schobel S."/>
            <person name="Town C.D."/>
        </authorList>
    </citation>
    <scope>GENOME REANNOTATION</scope>
    <source>
        <strain>cv. Columbia</strain>
    </source>
</reference>
<reference key="3">
    <citation type="submission" date="2004-09" db="EMBL/GenBank/DDBJ databases">
        <title>Large-scale analysis of RIKEN Arabidopsis full-length (RAFL) cDNAs.</title>
        <authorList>
            <person name="Totoki Y."/>
            <person name="Seki M."/>
            <person name="Ishida J."/>
            <person name="Nakajima M."/>
            <person name="Enju A."/>
            <person name="Kamiya A."/>
            <person name="Narusaka M."/>
            <person name="Shin-i T."/>
            <person name="Nakagawa M."/>
            <person name="Sakamoto N."/>
            <person name="Oishi K."/>
            <person name="Kohara Y."/>
            <person name="Kobayashi M."/>
            <person name="Toyoda A."/>
            <person name="Sakaki Y."/>
            <person name="Sakurai T."/>
            <person name="Iida K."/>
            <person name="Akiyama K."/>
            <person name="Satou M."/>
            <person name="Toyoda T."/>
            <person name="Konagaya A."/>
            <person name="Carninci P."/>
            <person name="Kawai J."/>
            <person name="Hayashizaki Y."/>
            <person name="Shinozaki K."/>
        </authorList>
    </citation>
    <scope>NUCLEOTIDE SEQUENCE [LARGE SCALE MRNA]</scope>
    <source>
        <strain>cv. Columbia</strain>
    </source>
</reference>
<reference key="4">
    <citation type="journal article" date="2020" name="PLoS ONE">
        <title>Identification of the enzymes responsible for m2,2G and acp3U formation on cytosolic tRNA from insects and plants.</title>
        <authorList>
            <person name="Funk H.M."/>
            <person name="Zhao R."/>
            <person name="Thomas M."/>
            <person name="Spigelmyer S.M."/>
            <person name="Sebree N.J."/>
            <person name="Bales R.O."/>
            <person name="Burchett J.B."/>
            <person name="Mamaril J.B."/>
            <person name="Limbach P.A."/>
            <person name="Guy M.P."/>
        </authorList>
    </citation>
    <scope>FUNCTION</scope>
    <scope>CATALYTIC ACTIVITY</scope>
    <scope>MUTAGENESIS OF ASP-200</scope>
</reference>